<feature type="chain" id="PRO_0000226021" description="Chaperone protein DnaK 1">
    <location>
        <begin position="1"/>
        <end position="749"/>
    </location>
</feature>
<feature type="region of interest" description="Disordered" evidence="2">
    <location>
        <begin position="643"/>
        <end position="749"/>
    </location>
</feature>
<feature type="compositionally biased region" description="Basic and acidic residues" evidence="2">
    <location>
        <begin position="643"/>
        <end position="653"/>
    </location>
</feature>
<feature type="compositionally biased region" description="Basic and acidic residues" evidence="2">
    <location>
        <begin position="661"/>
        <end position="694"/>
    </location>
</feature>
<feature type="compositionally biased region" description="Basic and acidic residues" evidence="2">
    <location>
        <begin position="711"/>
        <end position="724"/>
    </location>
</feature>
<feature type="compositionally biased region" description="Acidic residues" evidence="2">
    <location>
        <begin position="740"/>
        <end position="749"/>
    </location>
</feature>
<feature type="modified residue" description="Phosphothreonine; by autocatalysis" evidence="1">
    <location>
        <position position="198"/>
    </location>
</feature>
<gene>
    <name evidence="1" type="primary">dnaK1</name>
    <name type="ordered locus">syc1530_d</name>
</gene>
<reference key="1">
    <citation type="journal article" date="2007" name="Photosyn. Res.">
        <title>Complete nucleotide sequence of the freshwater unicellular cyanobacterium Synechococcus elongatus PCC 6301 chromosome: gene content and organization.</title>
        <authorList>
            <person name="Sugita C."/>
            <person name="Ogata K."/>
            <person name="Shikata M."/>
            <person name="Jikuya H."/>
            <person name="Takano J."/>
            <person name="Furumichi M."/>
            <person name="Kanehisa M."/>
            <person name="Omata T."/>
            <person name="Sugiura M."/>
            <person name="Sugita M."/>
        </authorList>
    </citation>
    <scope>NUCLEOTIDE SEQUENCE [LARGE SCALE GENOMIC DNA]</scope>
    <source>
        <strain>ATCC 27144 / PCC 6301 / SAUG 1402/1</strain>
    </source>
</reference>
<keyword id="KW-0067">ATP-binding</keyword>
<keyword id="KW-0143">Chaperone</keyword>
<keyword id="KW-0547">Nucleotide-binding</keyword>
<keyword id="KW-0597">Phosphoprotein</keyword>
<keyword id="KW-0346">Stress response</keyword>
<organism>
    <name type="scientific">Synechococcus sp. (strain ATCC 27144 / PCC 6301 / SAUG 1402/1)</name>
    <name type="common">Anacystis nidulans</name>
    <dbReference type="NCBI Taxonomy" id="269084"/>
    <lineage>
        <taxon>Bacteria</taxon>
        <taxon>Bacillati</taxon>
        <taxon>Cyanobacteriota</taxon>
        <taxon>Cyanophyceae</taxon>
        <taxon>Synechococcales</taxon>
        <taxon>Synechococcaceae</taxon>
        <taxon>Synechococcus</taxon>
    </lineage>
</organism>
<accession>Q5N1V0</accession>
<proteinExistence type="inferred from homology"/>
<sequence>MGRVVGIDLGTTNSVIAVMEGGKPMVIANAEGVRTTPSVVGVSKTGERLVGELARRQLVLNPRNTFANIKRFIGRRYDELTDESKRVPYTVRRDPEGNVRIVCPQLSREFAPEEVAAMILRKLAEEASRYLGEPVTGAVITVPAYFNDSQRQATRDAGRIAGLEVKRILNEPTAASLAYGLDRRDNQTILVFDLGGGTFDVSVLEVGNGVFEVKATSGDTQLGGNDFDRRIVDWLAEQFLEAEGIDLRRDRQALQRLIEAAEKAKIELSGVSVTDINLPFITATEDEPKHLETRLTRSEFEALCEDLLERMMRPLRRALKDARLQPQDIDEVVLVGGSTRMPMVQQLVRSLIGREPNQNVNPDEVVAIGAAIQAGILAGEVKDILLLDVTPLSLGLETIGGVMKKLIPRNTAIPVRRSDIFSTAENNQTMVEIHILQGERQLAEGNKSLGRFKLTGIPPAPRGVPQVQVSFDIDANGILQVSALDKTTGREQTVTIQGASTLSQEEVKRMMKDAELYAQQDRQLKARIEKRNRAQTLIAQSERRLREISLDFGLYFAESKRRRIESTIRELKDYLERQDDRGLDLALAELQDALFDLNQETAARLRDEEGEGFFEPLKQTFASLRGDGNRDFERSWDDRGGDRWDADPWDRSRRSTPSYGYDDRRSPVSDPYRGERWVEEQTSMSRREPVRDRNGGNGSVRPEPAPRRGRPTWEEDQPPRRDRSSQPPAKPASGRRWNDGWDDDDDEWF</sequence>
<comment type="function">
    <text evidence="1">Acts as a chaperone.</text>
</comment>
<comment type="induction">
    <text evidence="1">By stress conditions e.g. heat shock.</text>
</comment>
<comment type="similarity">
    <text evidence="1">Belongs to the heat shock protein 70 family.</text>
</comment>
<protein>
    <recommendedName>
        <fullName evidence="1">Chaperone protein DnaK 1</fullName>
    </recommendedName>
    <alternativeName>
        <fullName evidence="1">HSP70 1</fullName>
    </alternativeName>
    <alternativeName>
        <fullName evidence="1">Heat shock 70 kDa protein 1</fullName>
    </alternativeName>
    <alternativeName>
        <fullName evidence="1">Heat shock protein 70 1</fullName>
    </alternativeName>
</protein>
<name>DNAK1_SYNP6</name>
<evidence type="ECO:0000255" key="1">
    <source>
        <dbReference type="HAMAP-Rule" id="MF_00332"/>
    </source>
</evidence>
<evidence type="ECO:0000256" key="2">
    <source>
        <dbReference type="SAM" id="MobiDB-lite"/>
    </source>
</evidence>
<dbReference type="EMBL" id="AP008231">
    <property type="protein sequence ID" value="BAD79720.1"/>
    <property type="molecule type" value="Genomic_DNA"/>
</dbReference>
<dbReference type="RefSeq" id="WP_011243840.1">
    <property type="nucleotide sequence ID" value="NC_006576.1"/>
</dbReference>
<dbReference type="SMR" id="Q5N1V0"/>
<dbReference type="KEGG" id="syc:syc1530_d"/>
<dbReference type="eggNOG" id="COG0443">
    <property type="taxonomic scope" value="Bacteria"/>
</dbReference>
<dbReference type="Proteomes" id="UP000001175">
    <property type="component" value="Chromosome"/>
</dbReference>
<dbReference type="GO" id="GO:0005524">
    <property type="term" value="F:ATP binding"/>
    <property type="evidence" value="ECO:0007669"/>
    <property type="project" value="UniProtKB-UniRule"/>
</dbReference>
<dbReference type="GO" id="GO:0140662">
    <property type="term" value="F:ATP-dependent protein folding chaperone"/>
    <property type="evidence" value="ECO:0007669"/>
    <property type="project" value="InterPro"/>
</dbReference>
<dbReference type="GO" id="GO:0051082">
    <property type="term" value="F:unfolded protein binding"/>
    <property type="evidence" value="ECO:0007669"/>
    <property type="project" value="InterPro"/>
</dbReference>
<dbReference type="CDD" id="cd10234">
    <property type="entry name" value="ASKHA_NBD_HSP70_DnaK-like"/>
    <property type="match status" value="1"/>
</dbReference>
<dbReference type="FunFam" id="2.60.34.10:FF:000014">
    <property type="entry name" value="Chaperone protein DnaK HSP70"/>
    <property type="match status" value="1"/>
</dbReference>
<dbReference type="FunFam" id="3.30.420.40:FF:000004">
    <property type="entry name" value="Molecular chaperone DnaK"/>
    <property type="match status" value="1"/>
</dbReference>
<dbReference type="FunFam" id="3.90.640.10:FF:000003">
    <property type="entry name" value="Molecular chaperone DnaK"/>
    <property type="match status" value="1"/>
</dbReference>
<dbReference type="Gene3D" id="3.30.420.40">
    <property type="match status" value="2"/>
</dbReference>
<dbReference type="Gene3D" id="3.90.640.10">
    <property type="entry name" value="Actin, Chain A, domain 4"/>
    <property type="match status" value="1"/>
</dbReference>
<dbReference type="Gene3D" id="2.60.34.10">
    <property type="entry name" value="Substrate Binding Domain Of DNAk, Chain A, domain 1"/>
    <property type="match status" value="1"/>
</dbReference>
<dbReference type="HAMAP" id="MF_00332">
    <property type="entry name" value="DnaK"/>
    <property type="match status" value="1"/>
</dbReference>
<dbReference type="InterPro" id="IPR043129">
    <property type="entry name" value="ATPase_NBD"/>
</dbReference>
<dbReference type="InterPro" id="IPR012725">
    <property type="entry name" value="Chaperone_DnaK"/>
</dbReference>
<dbReference type="InterPro" id="IPR018181">
    <property type="entry name" value="Heat_shock_70_CS"/>
</dbReference>
<dbReference type="InterPro" id="IPR029047">
    <property type="entry name" value="HSP70_peptide-bd_sf"/>
</dbReference>
<dbReference type="InterPro" id="IPR013126">
    <property type="entry name" value="Hsp_70_fam"/>
</dbReference>
<dbReference type="NCBIfam" id="NF001413">
    <property type="entry name" value="PRK00290.1"/>
    <property type="match status" value="1"/>
</dbReference>
<dbReference type="NCBIfam" id="NF009946">
    <property type="entry name" value="PRK13410.1"/>
    <property type="match status" value="1"/>
</dbReference>
<dbReference type="NCBIfam" id="TIGR02350">
    <property type="entry name" value="prok_dnaK"/>
    <property type="match status" value="1"/>
</dbReference>
<dbReference type="PANTHER" id="PTHR19375">
    <property type="entry name" value="HEAT SHOCK PROTEIN 70KDA"/>
    <property type="match status" value="1"/>
</dbReference>
<dbReference type="Pfam" id="PF00012">
    <property type="entry name" value="HSP70"/>
    <property type="match status" value="1"/>
</dbReference>
<dbReference type="PRINTS" id="PR00301">
    <property type="entry name" value="HEATSHOCK70"/>
</dbReference>
<dbReference type="SUPFAM" id="SSF53067">
    <property type="entry name" value="Actin-like ATPase domain"/>
    <property type="match status" value="2"/>
</dbReference>
<dbReference type="SUPFAM" id="SSF100920">
    <property type="entry name" value="Heat shock protein 70kD (HSP70), peptide-binding domain"/>
    <property type="match status" value="1"/>
</dbReference>
<dbReference type="PROSITE" id="PS00297">
    <property type="entry name" value="HSP70_1"/>
    <property type="match status" value="1"/>
</dbReference>
<dbReference type="PROSITE" id="PS00329">
    <property type="entry name" value="HSP70_2"/>
    <property type="match status" value="1"/>
</dbReference>
<dbReference type="PROSITE" id="PS01036">
    <property type="entry name" value="HSP70_3"/>
    <property type="match status" value="1"/>
</dbReference>